<feature type="chain" id="PRO_0000149770" description="Uncharacterized HTH-type transcriptional regulator HI_0666.1">
    <location>
        <begin position="1"/>
        <end position="102"/>
    </location>
</feature>
<feature type="domain" description="HTH cro/C1-type" evidence="1">
    <location>
        <begin position="48"/>
        <end position="102"/>
    </location>
</feature>
<feature type="DNA-binding region" description="H-T-H motif" evidence="1">
    <location>
        <begin position="59"/>
        <end position="78"/>
    </location>
</feature>
<accession>O86228</accession>
<name>Y666A_HAEIN</name>
<protein>
    <recommendedName>
        <fullName>Uncharacterized HTH-type transcriptional regulator HI_0666.1</fullName>
    </recommendedName>
</protein>
<dbReference type="EMBL" id="L42023">
    <property type="protein sequence ID" value="AAC22327.1"/>
    <property type="molecule type" value="Genomic_DNA"/>
</dbReference>
<dbReference type="RefSeq" id="NP_438826.1">
    <property type="nucleotide sequence ID" value="NC_000907.1"/>
</dbReference>
<dbReference type="SMR" id="O86228"/>
<dbReference type="STRING" id="71421.HI_0666.1"/>
<dbReference type="EnsemblBacteria" id="AAC22327">
    <property type="protein sequence ID" value="AAC22327"/>
    <property type="gene ID" value="HI_0666.1"/>
</dbReference>
<dbReference type="KEGG" id="hin:HI_0666.1"/>
<dbReference type="PATRIC" id="fig|71421.8.peg.696"/>
<dbReference type="eggNOG" id="ENOG50335G4">
    <property type="taxonomic scope" value="Bacteria"/>
</dbReference>
<dbReference type="HOGENOM" id="CLU_177105_0_0_6"/>
<dbReference type="OrthoDB" id="5875726at2"/>
<dbReference type="BioCyc" id="HINF71421:G1GJ1-701-MONOMER"/>
<dbReference type="Proteomes" id="UP000000579">
    <property type="component" value="Chromosome"/>
</dbReference>
<dbReference type="GO" id="GO:0003677">
    <property type="term" value="F:DNA binding"/>
    <property type="evidence" value="ECO:0007669"/>
    <property type="project" value="UniProtKB-KW"/>
</dbReference>
<dbReference type="CDD" id="cd00093">
    <property type="entry name" value="HTH_XRE"/>
    <property type="match status" value="1"/>
</dbReference>
<dbReference type="Gene3D" id="1.10.260.40">
    <property type="entry name" value="lambda repressor-like DNA-binding domains"/>
    <property type="match status" value="1"/>
</dbReference>
<dbReference type="InterPro" id="IPR001387">
    <property type="entry name" value="Cro/C1-type_HTH"/>
</dbReference>
<dbReference type="InterPro" id="IPR010982">
    <property type="entry name" value="Lambda_DNA-bd_dom_sf"/>
</dbReference>
<dbReference type="Pfam" id="PF01381">
    <property type="entry name" value="HTH_3"/>
    <property type="match status" value="1"/>
</dbReference>
<dbReference type="SMART" id="SM00530">
    <property type="entry name" value="HTH_XRE"/>
    <property type="match status" value="1"/>
</dbReference>
<dbReference type="SUPFAM" id="SSF47413">
    <property type="entry name" value="lambda repressor-like DNA-binding domains"/>
    <property type="match status" value="1"/>
</dbReference>
<dbReference type="PROSITE" id="PS50943">
    <property type="entry name" value="HTH_CROC1"/>
    <property type="match status" value="1"/>
</dbReference>
<reference key="1">
    <citation type="journal article" date="1995" name="Science">
        <title>Whole-genome random sequencing and assembly of Haemophilus influenzae Rd.</title>
        <authorList>
            <person name="Fleischmann R.D."/>
            <person name="Adams M.D."/>
            <person name="White O."/>
            <person name="Clayton R.A."/>
            <person name="Kirkness E.F."/>
            <person name="Kerlavage A.R."/>
            <person name="Bult C.J."/>
            <person name="Tomb J.-F."/>
            <person name="Dougherty B.A."/>
            <person name="Merrick J.M."/>
            <person name="McKenney K."/>
            <person name="Sutton G.G."/>
            <person name="FitzHugh W."/>
            <person name="Fields C.A."/>
            <person name="Gocayne J.D."/>
            <person name="Scott J.D."/>
            <person name="Shirley R."/>
            <person name="Liu L.-I."/>
            <person name="Glodek A."/>
            <person name="Kelley J.M."/>
            <person name="Weidman J.F."/>
            <person name="Phillips C.A."/>
            <person name="Spriggs T."/>
            <person name="Hedblom E."/>
            <person name="Cotton M.D."/>
            <person name="Utterback T.R."/>
            <person name="Hanna M.C."/>
            <person name="Nguyen D.T."/>
            <person name="Saudek D.M."/>
            <person name="Brandon R.C."/>
            <person name="Fine L.D."/>
            <person name="Fritchman J.L."/>
            <person name="Fuhrmann J.L."/>
            <person name="Geoghagen N.S.M."/>
            <person name="Gnehm C.L."/>
            <person name="McDonald L.A."/>
            <person name="Small K.V."/>
            <person name="Fraser C.M."/>
            <person name="Smith H.O."/>
            <person name="Venter J.C."/>
        </authorList>
    </citation>
    <scope>NUCLEOTIDE SEQUENCE [LARGE SCALE GENOMIC DNA]</scope>
    <source>
        <strain>ATCC 51907 / DSM 11121 / KW20 / Rd</strain>
    </source>
</reference>
<reference key="2">
    <citation type="submission" date="1998-05" db="EMBL/GenBank/DDBJ databases">
        <authorList>
            <person name="White O."/>
            <person name="Clayton R.A."/>
            <person name="Kerlavage A.R."/>
            <person name="Fleischmann R.D."/>
            <person name="Peterson J."/>
            <person name="Hickey E."/>
            <person name="Dodson R."/>
            <person name="Gwinn M."/>
        </authorList>
    </citation>
    <scope>IDENTIFICATION</scope>
</reference>
<evidence type="ECO:0000255" key="1">
    <source>
        <dbReference type="PROSITE-ProRule" id="PRU00257"/>
    </source>
</evidence>
<proteinExistence type="predicted"/>
<keyword id="KW-0238">DNA-binding</keyword>
<keyword id="KW-1185">Reference proteome</keyword>
<keyword id="KW-0804">Transcription</keyword>
<keyword id="KW-0805">Transcription regulation</keyword>
<organism>
    <name type="scientific">Haemophilus influenzae (strain ATCC 51907 / DSM 11121 / KW20 / Rd)</name>
    <dbReference type="NCBI Taxonomy" id="71421"/>
    <lineage>
        <taxon>Bacteria</taxon>
        <taxon>Pseudomonadati</taxon>
        <taxon>Pseudomonadota</taxon>
        <taxon>Gammaproteobacteria</taxon>
        <taxon>Pasteurellales</taxon>
        <taxon>Pasteurellaceae</taxon>
        <taxon>Haemophilus</taxon>
    </lineage>
</organism>
<gene>
    <name type="ordered locus">HI_0666.1</name>
</gene>
<sequence length="102" mass="11464">MDNLSAQLENQIDELKKLQKSVITYEQAQRQQLYAGKITDLKAFGKMLNDKRKSLGIELSMLELQTGVSISTLNRLFQDPSQVRFTTVFLVAQTLGVSLCAI</sequence>